<keyword id="KW-0008">Acetylcholine receptor inhibiting toxin</keyword>
<keyword id="KW-0903">Direct protein sequencing</keyword>
<keyword id="KW-1015">Disulfide bond</keyword>
<keyword id="KW-0872">Ion channel impairing toxin</keyword>
<keyword id="KW-0528">Neurotoxin</keyword>
<keyword id="KW-0629">Postsynaptic neurotoxin</keyword>
<keyword id="KW-0964">Secreted</keyword>
<keyword id="KW-0800">Toxin</keyword>
<dbReference type="PIR" id="A91768">
    <property type="entry name" value="N1NJ1P"/>
</dbReference>
<dbReference type="PIR" id="B94448">
    <property type="entry name" value="N1NJ2P"/>
</dbReference>
<dbReference type="SMR" id="P60773"/>
<dbReference type="GO" id="GO:0005576">
    <property type="term" value="C:extracellular region"/>
    <property type="evidence" value="ECO:0007669"/>
    <property type="project" value="UniProtKB-SubCell"/>
</dbReference>
<dbReference type="GO" id="GO:0030550">
    <property type="term" value="F:acetylcholine receptor inhibitor activity"/>
    <property type="evidence" value="ECO:0007669"/>
    <property type="project" value="UniProtKB-KW"/>
</dbReference>
<dbReference type="GO" id="GO:0099106">
    <property type="term" value="F:ion channel regulator activity"/>
    <property type="evidence" value="ECO:0007669"/>
    <property type="project" value="UniProtKB-KW"/>
</dbReference>
<dbReference type="GO" id="GO:0090729">
    <property type="term" value="F:toxin activity"/>
    <property type="evidence" value="ECO:0007669"/>
    <property type="project" value="UniProtKB-KW"/>
</dbReference>
<dbReference type="CDD" id="cd00206">
    <property type="entry name" value="TFP_snake_toxin"/>
    <property type="match status" value="1"/>
</dbReference>
<dbReference type="FunFam" id="2.10.60.10:FF:000024">
    <property type="entry name" value="Cytotoxin 1"/>
    <property type="match status" value="1"/>
</dbReference>
<dbReference type="Gene3D" id="2.10.60.10">
    <property type="entry name" value="CD59"/>
    <property type="match status" value="1"/>
</dbReference>
<dbReference type="InterPro" id="IPR003571">
    <property type="entry name" value="Snake_3FTx"/>
</dbReference>
<dbReference type="InterPro" id="IPR045860">
    <property type="entry name" value="Snake_toxin-like_sf"/>
</dbReference>
<dbReference type="InterPro" id="IPR018354">
    <property type="entry name" value="Snake_toxin_con_site"/>
</dbReference>
<dbReference type="InterPro" id="IPR054131">
    <property type="entry name" value="Toxin_cobra-type"/>
</dbReference>
<dbReference type="Pfam" id="PF21947">
    <property type="entry name" value="Toxin_cobra-type"/>
    <property type="match status" value="1"/>
</dbReference>
<dbReference type="SUPFAM" id="SSF57302">
    <property type="entry name" value="Snake toxin-like"/>
    <property type="match status" value="1"/>
</dbReference>
<dbReference type="PROSITE" id="PS00272">
    <property type="entry name" value="SNAKE_TOXIN"/>
    <property type="match status" value="1"/>
</dbReference>
<reference key="1">
    <citation type="journal article" date="1974" name="Int. J. Pept. Protein Res.">
        <title>The major lethal neurotoxin of the venom of Naja naja philippinensis. Purification, physical and chemical properties, partial amino acid sequence.</title>
        <authorList>
            <person name="Hauert J."/>
            <person name="Maire M."/>
            <person name="Sussmann A."/>
            <person name="Bargetzi J.-P."/>
        </authorList>
    </citation>
    <scope>PROTEIN SEQUENCE (MAJOR COMPONENT)</scope>
    <scope>SUBCELLULAR LOCATION</scope>
    <source>
        <tissue>Venom</tissue>
    </source>
</reference>
<reference key="2">
    <citation type="thesis" date="1977" institute="University of Geneva" country="Switzerland">
        <authorList>
            <person name="Hauert J."/>
        </authorList>
    </citation>
    <scope>PROTEIN SEQUENCE (MINOR COMPONENT)</scope>
    <source>
        <tissue>Venom</tissue>
    </source>
</reference>
<comment type="function">
    <text evidence="2">Binds to muscle nicotinic acetylcholine receptor (nAChR) and inhibit acetylcholine from binding to the receptor, thereby impairing neuromuscular transmission.</text>
</comment>
<comment type="subcellular location">
    <subcellularLocation>
        <location evidence="3">Secreted</location>
    </subcellularLocation>
</comment>
<comment type="tissue specificity">
    <text evidence="4">Expressed by the venom gland.</text>
</comment>
<comment type="toxic dose">
    <text>LD(50) is 0.05 mg/kg by intravenous injection.</text>
</comment>
<comment type="similarity">
    <text evidence="4">Belongs to the three-finger toxin family. Short-chain subfamily. Type I alpha-neurotoxin sub-subfamily.</text>
</comment>
<feature type="chain" id="PRO_0000093609" description="Short neurotoxin 1" evidence="3">
    <location>
        <begin position="1"/>
        <end position="61"/>
    </location>
</feature>
<feature type="disulfide bond" evidence="1">
    <location>
        <begin position="3"/>
        <end position="23"/>
    </location>
</feature>
<feature type="disulfide bond" evidence="1">
    <location>
        <begin position="17"/>
        <end position="40"/>
    </location>
</feature>
<feature type="disulfide bond" evidence="1">
    <location>
        <begin position="42"/>
        <end position="53"/>
    </location>
</feature>
<feature type="disulfide bond" evidence="1">
    <location>
        <begin position="54"/>
        <end position="59"/>
    </location>
</feature>
<feature type="sequence variant" description="In minor component.">
    <original>R</original>
    <variation>T</variation>
    <location>
        <position position="55"/>
    </location>
</feature>
<name>3S11_NAJPH</name>
<organism>
    <name type="scientific">Naja philippinensis</name>
    <name type="common">Philippine cobra</name>
    <dbReference type="NCBI Taxonomy" id="8659"/>
    <lineage>
        <taxon>Eukaryota</taxon>
        <taxon>Metazoa</taxon>
        <taxon>Chordata</taxon>
        <taxon>Craniata</taxon>
        <taxon>Vertebrata</taxon>
        <taxon>Euteleostomi</taxon>
        <taxon>Lepidosauria</taxon>
        <taxon>Squamata</taxon>
        <taxon>Bifurcata</taxon>
        <taxon>Unidentata</taxon>
        <taxon>Episquamata</taxon>
        <taxon>Toxicofera</taxon>
        <taxon>Serpentes</taxon>
        <taxon>Colubroidea</taxon>
        <taxon>Elapidae</taxon>
        <taxon>Elapinae</taxon>
        <taxon>Naja</taxon>
    </lineage>
</organism>
<protein>
    <recommendedName>
        <fullName>Short neurotoxin 1</fullName>
        <shortName>NTX I</shortName>
    </recommendedName>
</protein>
<accession>P60773</accession>
<accession>P01428</accession>
<evidence type="ECO:0000250" key="1">
    <source>
        <dbReference type="UniProtKB" id="P0C1Z0"/>
    </source>
</evidence>
<evidence type="ECO:0000250" key="2">
    <source>
        <dbReference type="UniProtKB" id="P60775"/>
    </source>
</evidence>
<evidence type="ECO:0000269" key="3">
    <source>
    </source>
</evidence>
<evidence type="ECO:0000305" key="4"/>
<sequence>LECHNQQSSQAPTTKTCSGETNCYKKWWSDHRGTIIERGCGCPKVKPGVKLNCCRTDRCNN</sequence>
<proteinExistence type="evidence at protein level"/>